<organism>
    <name type="scientific">Vibrio cholerae serotype O1 (strain ATCC 39315 / El Tor Inaba N16961)</name>
    <dbReference type="NCBI Taxonomy" id="243277"/>
    <lineage>
        <taxon>Bacteria</taxon>
        <taxon>Pseudomonadati</taxon>
        <taxon>Pseudomonadota</taxon>
        <taxon>Gammaproteobacteria</taxon>
        <taxon>Vibrionales</taxon>
        <taxon>Vibrionaceae</taxon>
        <taxon>Vibrio</taxon>
    </lineage>
</organism>
<keyword id="KW-0067">ATP-binding</keyword>
<keyword id="KW-0963">Cytoplasm</keyword>
<keyword id="KW-0547">Nucleotide-binding</keyword>
<keyword id="KW-0548">Nucleotidyltransferase</keyword>
<keyword id="KW-1185">Reference proteome</keyword>
<keyword id="KW-0808">Transferase</keyword>
<keyword id="KW-0819">tRNA processing</keyword>
<dbReference type="EC" id="2.7.7.87" evidence="1"/>
<dbReference type="EMBL" id="AF459402">
    <property type="protein sequence ID" value="AAL66733.1"/>
    <property type="molecule type" value="Genomic_DNA"/>
</dbReference>
<dbReference type="EMBL" id="AE003852">
    <property type="protein sequence ID" value="AAF93232.1"/>
    <property type="molecule type" value="Genomic_DNA"/>
</dbReference>
<dbReference type="PIR" id="E82370">
    <property type="entry name" value="E82370"/>
</dbReference>
<dbReference type="RefSeq" id="NP_229713.1">
    <property type="nucleotide sequence ID" value="NC_002505.1"/>
</dbReference>
<dbReference type="SMR" id="Q9KVT5"/>
<dbReference type="STRING" id="243277.VC_0054"/>
<dbReference type="DNASU" id="2614432"/>
<dbReference type="EnsemblBacteria" id="AAF93232">
    <property type="protein sequence ID" value="AAF93232"/>
    <property type="gene ID" value="VC_0054"/>
</dbReference>
<dbReference type="KEGG" id="vch:VC_0054"/>
<dbReference type="PATRIC" id="fig|243277.26.peg.52"/>
<dbReference type="eggNOG" id="COG0009">
    <property type="taxonomic scope" value="Bacteria"/>
</dbReference>
<dbReference type="HOGENOM" id="CLU_031397_6_0_6"/>
<dbReference type="Proteomes" id="UP000000584">
    <property type="component" value="Chromosome 1"/>
</dbReference>
<dbReference type="GO" id="GO:0005737">
    <property type="term" value="C:cytoplasm"/>
    <property type="evidence" value="ECO:0000318"/>
    <property type="project" value="GO_Central"/>
</dbReference>
<dbReference type="GO" id="GO:0005524">
    <property type="term" value="F:ATP binding"/>
    <property type="evidence" value="ECO:0007669"/>
    <property type="project" value="UniProtKB-UniRule"/>
</dbReference>
<dbReference type="GO" id="GO:0003725">
    <property type="term" value="F:double-stranded RNA binding"/>
    <property type="evidence" value="ECO:0007669"/>
    <property type="project" value="InterPro"/>
</dbReference>
<dbReference type="GO" id="GO:0061710">
    <property type="term" value="F:L-threonylcarbamoyladenylate synthase"/>
    <property type="evidence" value="ECO:0007669"/>
    <property type="project" value="UniProtKB-EC"/>
</dbReference>
<dbReference type="GO" id="GO:0016779">
    <property type="term" value="F:nucleotidyltransferase activity"/>
    <property type="evidence" value="ECO:0000318"/>
    <property type="project" value="GO_Central"/>
</dbReference>
<dbReference type="GO" id="GO:0000049">
    <property type="term" value="F:tRNA binding"/>
    <property type="evidence" value="ECO:0000318"/>
    <property type="project" value="GO_Central"/>
</dbReference>
<dbReference type="GO" id="GO:0006450">
    <property type="term" value="P:regulation of translational fidelity"/>
    <property type="evidence" value="ECO:0000318"/>
    <property type="project" value="GO_Central"/>
</dbReference>
<dbReference type="GO" id="GO:0002949">
    <property type="term" value="P:tRNA threonylcarbamoyladenosine modification"/>
    <property type="evidence" value="ECO:0007669"/>
    <property type="project" value="UniProtKB-UniRule"/>
</dbReference>
<dbReference type="FunFam" id="3.90.870.10:FF:000004">
    <property type="entry name" value="Threonylcarbamoyl-AMP synthase"/>
    <property type="match status" value="1"/>
</dbReference>
<dbReference type="Gene3D" id="3.90.870.10">
    <property type="entry name" value="DHBP synthase"/>
    <property type="match status" value="1"/>
</dbReference>
<dbReference type="HAMAP" id="MF_01852">
    <property type="entry name" value="TsaC"/>
    <property type="match status" value="1"/>
</dbReference>
<dbReference type="InterPro" id="IPR017945">
    <property type="entry name" value="DHBP_synth_RibB-like_a/b_dom"/>
</dbReference>
<dbReference type="InterPro" id="IPR006070">
    <property type="entry name" value="Sua5-like_dom"/>
</dbReference>
<dbReference type="InterPro" id="IPR023535">
    <property type="entry name" value="TC-AMP_synthase"/>
</dbReference>
<dbReference type="InterPro" id="IPR050156">
    <property type="entry name" value="TC-AMP_synthase_SUA5"/>
</dbReference>
<dbReference type="NCBIfam" id="TIGR00057">
    <property type="entry name" value="L-threonylcarbamoyladenylate synthase"/>
    <property type="match status" value="1"/>
</dbReference>
<dbReference type="PANTHER" id="PTHR17490">
    <property type="entry name" value="SUA5"/>
    <property type="match status" value="1"/>
</dbReference>
<dbReference type="PANTHER" id="PTHR17490:SF18">
    <property type="entry name" value="THREONYLCARBAMOYL-AMP SYNTHASE"/>
    <property type="match status" value="1"/>
</dbReference>
<dbReference type="Pfam" id="PF01300">
    <property type="entry name" value="Sua5_yciO_yrdC"/>
    <property type="match status" value="1"/>
</dbReference>
<dbReference type="SUPFAM" id="SSF55821">
    <property type="entry name" value="YrdC/RibB"/>
    <property type="match status" value="1"/>
</dbReference>
<dbReference type="PROSITE" id="PS51163">
    <property type="entry name" value="YRDC"/>
    <property type="match status" value="1"/>
</dbReference>
<protein>
    <recommendedName>
        <fullName evidence="1">Threonylcarbamoyl-AMP synthase</fullName>
        <shortName evidence="1">TC-AMP synthase</shortName>
        <ecNumber evidence="1">2.7.7.87</ecNumber>
    </recommendedName>
    <alternativeName>
        <fullName evidence="1">L-threonylcarbamoyladenylate synthase</fullName>
    </alternativeName>
    <alternativeName>
        <fullName evidence="1">t(6)A37 threonylcarbamoyladenosine biosynthesis protein TsaC</fullName>
    </alternativeName>
    <alternativeName>
        <fullName evidence="1">tRNA threonylcarbamoyladenosine biosynthesis protein TsaC</fullName>
    </alternativeName>
</protein>
<sequence>MALVENLQQAVDALRKGCVIAYPTEGVFGLGCDPDNQTAMLRLLAIKQRPVEKGVILIAASYAQLRPYVDETQLTAEQLTQVLASWPAPLTWVMPASGDTPSWVRGQFDTVAVRVSDHPVVQKLCLAFGKPLTSTSANLSGQPACVTQQEVMVQLGNQIAVVVEGKTSGRHGPSEIRDARSLQVLRQG</sequence>
<evidence type="ECO:0000255" key="1">
    <source>
        <dbReference type="HAMAP-Rule" id="MF_01852"/>
    </source>
</evidence>
<feature type="chain" id="PRO_0000353001" description="Threonylcarbamoyl-AMP synthase">
    <location>
        <begin position="1"/>
        <end position="188"/>
    </location>
</feature>
<feature type="domain" description="YrdC-like" evidence="1">
    <location>
        <begin position="4"/>
        <end position="188"/>
    </location>
</feature>
<reference key="1">
    <citation type="submission" date="2001-12" db="EMBL/GenBank/DDBJ databases">
        <title>Identification of two Vibrio cholerae El Tor genes induced in the estuarine environment.</title>
        <authorList>
            <person name="Soares C.A.G."/>
            <person name="DiRita V.J."/>
            <person name="Santos E.O."/>
            <person name="Coelho A."/>
        </authorList>
    </citation>
    <scope>NUCLEOTIDE SEQUENCE [GENOMIC DNA]</scope>
    <source>
        <strain>El Tor C3294</strain>
    </source>
</reference>
<reference key="2">
    <citation type="journal article" date="2000" name="Nature">
        <title>DNA sequence of both chromosomes of the cholera pathogen Vibrio cholerae.</title>
        <authorList>
            <person name="Heidelberg J.F."/>
            <person name="Eisen J.A."/>
            <person name="Nelson W.C."/>
            <person name="Clayton R.A."/>
            <person name="Gwinn M.L."/>
            <person name="Dodson R.J."/>
            <person name="Haft D.H."/>
            <person name="Hickey E.K."/>
            <person name="Peterson J.D."/>
            <person name="Umayam L.A."/>
            <person name="Gill S.R."/>
            <person name="Nelson K.E."/>
            <person name="Read T.D."/>
            <person name="Tettelin H."/>
            <person name="Richardson D.L."/>
            <person name="Ermolaeva M.D."/>
            <person name="Vamathevan J.J."/>
            <person name="Bass S."/>
            <person name="Qin H."/>
            <person name="Dragoi I."/>
            <person name="Sellers P."/>
            <person name="McDonald L.A."/>
            <person name="Utterback T.R."/>
            <person name="Fleischmann R.D."/>
            <person name="Nierman W.C."/>
            <person name="White O."/>
            <person name="Salzberg S.L."/>
            <person name="Smith H.O."/>
            <person name="Colwell R.R."/>
            <person name="Mekalanos J.J."/>
            <person name="Venter J.C."/>
            <person name="Fraser C.M."/>
        </authorList>
    </citation>
    <scope>NUCLEOTIDE SEQUENCE [LARGE SCALE GENOMIC DNA]</scope>
    <source>
        <strain>ATCC 39315 / El Tor Inaba N16961</strain>
    </source>
</reference>
<name>TSAC_VIBCH</name>
<proteinExistence type="inferred from homology"/>
<gene>
    <name evidence="1" type="primary">tsaC</name>
    <name type="synonym">rimN</name>
    <name type="ordered locus">VC_0054</name>
</gene>
<comment type="function">
    <text evidence="1">Required for the formation of a threonylcarbamoyl group on adenosine at position 37 (t(6)A37) in tRNAs that read codons beginning with adenine. Catalyzes the conversion of L-threonine, HCO(3)(-)/CO(2) and ATP to give threonylcarbamoyl-AMP (TC-AMP) as the acyladenylate intermediate, with the release of diphosphate.</text>
</comment>
<comment type="catalytic activity">
    <reaction evidence="1">
        <text>L-threonine + hydrogencarbonate + ATP = L-threonylcarbamoyladenylate + diphosphate + H2O</text>
        <dbReference type="Rhea" id="RHEA:36407"/>
        <dbReference type="ChEBI" id="CHEBI:15377"/>
        <dbReference type="ChEBI" id="CHEBI:17544"/>
        <dbReference type="ChEBI" id="CHEBI:30616"/>
        <dbReference type="ChEBI" id="CHEBI:33019"/>
        <dbReference type="ChEBI" id="CHEBI:57926"/>
        <dbReference type="ChEBI" id="CHEBI:73682"/>
        <dbReference type="EC" id="2.7.7.87"/>
    </reaction>
</comment>
<comment type="subcellular location">
    <subcellularLocation>
        <location evidence="1">Cytoplasm</location>
    </subcellularLocation>
</comment>
<comment type="similarity">
    <text evidence="1">Belongs to the SUA5 family. TsaC subfamily.</text>
</comment>
<accession>Q9KVT5</accession>
<accession>Q7B8Z5</accession>